<name>Y942_METJA</name>
<organism>
    <name type="scientific">Methanocaldococcus jannaschii (strain ATCC 43067 / DSM 2661 / JAL-1 / JCM 10045 / NBRC 100440)</name>
    <name type="common">Methanococcus jannaschii</name>
    <dbReference type="NCBI Taxonomy" id="243232"/>
    <lineage>
        <taxon>Archaea</taxon>
        <taxon>Methanobacteriati</taxon>
        <taxon>Methanobacteriota</taxon>
        <taxon>Methanomada group</taxon>
        <taxon>Methanococci</taxon>
        <taxon>Methanococcales</taxon>
        <taxon>Methanocaldococcaceae</taxon>
        <taxon>Methanocaldococcus</taxon>
    </lineage>
</organism>
<comment type="function">
    <text evidence="1">Might be a 5'-3' DNA helicase.</text>
</comment>
<comment type="catalytic activity">
    <reaction evidence="1">
        <text>Couples ATP hydrolysis with the unwinding of duplex DNA at the replication fork by translocating in the 5'-3' direction. This creates two antiparallel DNA single strands (ssDNA). The leading ssDNA polymer is the template for DNA polymerase III holoenzyme which synthesizes a continuous strand.</text>
        <dbReference type="EC" id="5.6.2.3"/>
    </reaction>
</comment>
<comment type="catalytic activity">
    <reaction evidence="1">
        <text>ATP + H2O = ADP + phosphate + H(+)</text>
        <dbReference type="Rhea" id="RHEA:13065"/>
        <dbReference type="ChEBI" id="CHEBI:15377"/>
        <dbReference type="ChEBI" id="CHEBI:15378"/>
        <dbReference type="ChEBI" id="CHEBI:30616"/>
        <dbReference type="ChEBI" id="CHEBI:43474"/>
        <dbReference type="ChEBI" id="CHEBI:456216"/>
        <dbReference type="EC" id="5.6.2.3"/>
    </reaction>
</comment>
<comment type="cofactor">
    <cofactor evidence="1">
        <name>[4Fe-4S] cluster</name>
        <dbReference type="ChEBI" id="CHEBI:49883"/>
    </cofactor>
    <text evidence="1">Binds 1 [4Fe-4S] cluster.</text>
</comment>
<comment type="miscellaneous">
    <text evidence="4">The fourth ligand for the [4Fe-4S] cluster could be Cys-130; Cys-132 or Cys-152.</text>
</comment>
<comment type="similarity">
    <text evidence="4">Belongs to the helicase family. DinG subfamily.</text>
</comment>
<protein>
    <recommendedName>
        <fullName evidence="4">Probable ATP-dependent helicase MJ0942</fullName>
        <ecNumber evidence="1">5.6.2.3</ecNumber>
    </recommendedName>
</protein>
<dbReference type="EC" id="5.6.2.3" evidence="1"/>
<dbReference type="EMBL" id="L77117">
    <property type="protein sequence ID" value="AAB98945.1"/>
    <property type="molecule type" value="Genomic_DNA"/>
</dbReference>
<dbReference type="PIR" id="F64417">
    <property type="entry name" value="F64417"/>
</dbReference>
<dbReference type="RefSeq" id="WP_010870456.1">
    <property type="nucleotide sequence ID" value="NC_000909.1"/>
</dbReference>
<dbReference type="SMR" id="Q58352"/>
<dbReference type="FunCoup" id="Q58352">
    <property type="interactions" value="45"/>
</dbReference>
<dbReference type="STRING" id="243232.MJ_0942"/>
<dbReference type="PaxDb" id="243232-MJ_0942"/>
<dbReference type="EnsemblBacteria" id="AAB98945">
    <property type="protein sequence ID" value="AAB98945"/>
    <property type="gene ID" value="MJ_0942"/>
</dbReference>
<dbReference type="GeneID" id="1451838"/>
<dbReference type="KEGG" id="mja:MJ_0942"/>
<dbReference type="eggNOG" id="arCOG00770">
    <property type="taxonomic scope" value="Archaea"/>
</dbReference>
<dbReference type="HOGENOM" id="CLU_012117_2_0_2"/>
<dbReference type="InParanoid" id="Q58352"/>
<dbReference type="OrthoDB" id="27512at2157"/>
<dbReference type="PhylomeDB" id="Q58352"/>
<dbReference type="Proteomes" id="UP000000805">
    <property type="component" value="Chromosome"/>
</dbReference>
<dbReference type="GO" id="GO:0005524">
    <property type="term" value="F:ATP binding"/>
    <property type="evidence" value="ECO:0007669"/>
    <property type="project" value="UniProtKB-KW"/>
</dbReference>
<dbReference type="GO" id="GO:0016887">
    <property type="term" value="F:ATP hydrolysis activity"/>
    <property type="evidence" value="ECO:0007669"/>
    <property type="project" value="RHEA"/>
</dbReference>
<dbReference type="GO" id="GO:0003677">
    <property type="term" value="F:DNA binding"/>
    <property type="evidence" value="ECO:0007669"/>
    <property type="project" value="UniProtKB-KW"/>
</dbReference>
<dbReference type="GO" id="GO:0003678">
    <property type="term" value="F:DNA helicase activity"/>
    <property type="evidence" value="ECO:0000318"/>
    <property type="project" value="GO_Central"/>
</dbReference>
<dbReference type="GO" id="GO:0051536">
    <property type="term" value="F:iron-sulfur cluster binding"/>
    <property type="evidence" value="ECO:0007669"/>
    <property type="project" value="UniProtKB-KW"/>
</dbReference>
<dbReference type="GO" id="GO:0046872">
    <property type="term" value="F:metal ion binding"/>
    <property type="evidence" value="ECO:0007669"/>
    <property type="project" value="UniProtKB-KW"/>
</dbReference>
<dbReference type="GO" id="GO:0006139">
    <property type="term" value="P:nucleobase-containing compound metabolic process"/>
    <property type="evidence" value="ECO:0007669"/>
    <property type="project" value="InterPro"/>
</dbReference>
<dbReference type="Gene3D" id="3.40.50.300">
    <property type="entry name" value="P-loop containing nucleotide triphosphate hydrolases"/>
    <property type="match status" value="2"/>
</dbReference>
<dbReference type="InterPro" id="IPR006555">
    <property type="entry name" value="ATP-dep_Helicase_C"/>
</dbReference>
<dbReference type="InterPro" id="IPR045028">
    <property type="entry name" value="DinG/Rad3-like"/>
</dbReference>
<dbReference type="InterPro" id="IPR014013">
    <property type="entry name" value="Helic_SF1/SF2_ATP-bd_DinG/Rad3"/>
</dbReference>
<dbReference type="InterPro" id="IPR006935">
    <property type="entry name" value="Helicase/UvrB_N"/>
</dbReference>
<dbReference type="InterPro" id="IPR014001">
    <property type="entry name" value="Helicase_ATP-bd"/>
</dbReference>
<dbReference type="InterPro" id="IPR001650">
    <property type="entry name" value="Helicase_C-like"/>
</dbReference>
<dbReference type="InterPro" id="IPR027417">
    <property type="entry name" value="P-loop_NTPase"/>
</dbReference>
<dbReference type="PANTHER" id="PTHR11472">
    <property type="entry name" value="DNA REPAIR DEAD HELICASE RAD3/XP-D SUBFAMILY MEMBER"/>
    <property type="match status" value="1"/>
</dbReference>
<dbReference type="PANTHER" id="PTHR11472:SF34">
    <property type="entry name" value="REGULATOR OF TELOMERE ELONGATION HELICASE 1"/>
    <property type="match status" value="1"/>
</dbReference>
<dbReference type="Pfam" id="PF13307">
    <property type="entry name" value="Helicase_C_2"/>
    <property type="match status" value="1"/>
</dbReference>
<dbReference type="Pfam" id="PF04851">
    <property type="entry name" value="ResIII"/>
    <property type="match status" value="1"/>
</dbReference>
<dbReference type="SMART" id="SM00487">
    <property type="entry name" value="DEXDc"/>
    <property type="match status" value="1"/>
</dbReference>
<dbReference type="SMART" id="SM00491">
    <property type="entry name" value="HELICc2"/>
    <property type="match status" value="1"/>
</dbReference>
<dbReference type="SUPFAM" id="SSF52540">
    <property type="entry name" value="P-loop containing nucleoside triphosphate hydrolases"/>
    <property type="match status" value="1"/>
</dbReference>
<dbReference type="PROSITE" id="PS51192">
    <property type="entry name" value="HELICASE_ATP_BIND_1"/>
    <property type="match status" value="1"/>
</dbReference>
<dbReference type="PROSITE" id="PS51193">
    <property type="entry name" value="HELICASE_ATP_BIND_2"/>
    <property type="match status" value="1"/>
</dbReference>
<dbReference type="PROSITE" id="PS51194">
    <property type="entry name" value="HELICASE_CTER"/>
    <property type="match status" value="1"/>
</dbReference>
<sequence length="651" mass="75957">MEFKGYIKEKFPYPKVREPQKRMMLKIYECIKNKRNLIVEAPTGVGKTLGYLIPALYFAERRKRVLILTETIDQQVRIYEDLSSLRHNLKVAFLMGKSNFICKSKGGKANRLYCQLNKKCLYRPNKRPICYCGTKKQPVNLGDKVIYYCPYCTCEYQKAKIESILADIVVMNNSMFYYAKEDIEAKRDIDIIICDEAHKLESSIRNTSTIIINPELPINRLKYMAIHYAPNILKKRLDIGDENFWEIIEKYLTSRGINIDICKETIIFDGENLSSWKYKTELAVLGAILDAYYQINNIKNKILRFNENEEIDREELRFEIDNKALIAIELDFIHKKKLSDLYLLEFIENIKNLRYINENYVVYRSGNSLLCEPVFVSSHLKELYGNAVVIHCSATIGNLKMHALKTGLDKAEFLILESPFPKNRKKIIALKDGVDMKYERKDREKANKNLLKILEAINGNSLVLFKSFEDLDSFYKYLKREITKTNIKNKNIHVYEQGMDGKEAKELKERFEKIGGILLATGRFAEGVDIPGEALVGVVIDSLPFPVPTPLILREQKILEERFKIRGVRDAHWRAFLMTSFDRMARTLVQMIGRLIRTENDYGVVVIQDKRFADWVGRVMREKGYLKDNYEVMSLDMAIKYIPKFMSQFKN</sequence>
<evidence type="ECO:0000250" key="1">
    <source>
        <dbReference type="UniProtKB" id="P27296"/>
    </source>
</evidence>
<evidence type="ECO:0000255" key="2">
    <source>
        <dbReference type="PROSITE-ProRule" id="PRU00541"/>
    </source>
</evidence>
<evidence type="ECO:0000255" key="3">
    <source>
        <dbReference type="PROSITE-ProRule" id="PRU00542"/>
    </source>
</evidence>
<evidence type="ECO:0000305" key="4"/>
<gene>
    <name type="ordered locus">MJ0942</name>
</gene>
<feature type="chain" id="PRO_0000102009" description="Probable ATP-dependent helicase MJ0942">
    <location>
        <begin position="1"/>
        <end position="651"/>
    </location>
</feature>
<feature type="domain" description="Helicase ATP-binding" evidence="2">
    <location>
        <begin position="6"/>
        <end position="255"/>
    </location>
</feature>
<feature type="domain" description="Helicase C-terminal" evidence="3">
    <location>
        <begin position="449"/>
        <end position="638"/>
    </location>
</feature>
<feature type="short sequence motif" description="DEAH box">
    <location>
        <begin position="195"/>
        <end position="198"/>
    </location>
</feature>
<feature type="binding site" evidence="2">
    <location>
        <begin position="41"/>
        <end position="48"/>
    </location>
    <ligand>
        <name>ATP</name>
        <dbReference type="ChEBI" id="CHEBI:30616"/>
    </ligand>
</feature>
<feature type="binding site" evidence="1">
    <location>
        <position position="102"/>
    </location>
    <ligand>
        <name>[4Fe-4S] cluster</name>
        <dbReference type="ChEBI" id="CHEBI:49883"/>
    </ligand>
</feature>
<feature type="binding site" evidence="1">
    <location>
        <position position="149"/>
    </location>
    <ligand>
        <name>[4Fe-4S] cluster</name>
        <dbReference type="ChEBI" id="CHEBI:49883"/>
    </ligand>
</feature>
<feature type="binding site" evidence="1">
    <location>
        <position position="154"/>
    </location>
    <ligand>
        <name>[4Fe-4S] cluster</name>
        <dbReference type="ChEBI" id="CHEBI:49883"/>
    </ligand>
</feature>
<proteinExistence type="inferred from homology"/>
<keyword id="KW-0067">ATP-binding</keyword>
<keyword id="KW-0238">DNA-binding</keyword>
<keyword id="KW-0347">Helicase</keyword>
<keyword id="KW-0378">Hydrolase</keyword>
<keyword id="KW-0408">Iron</keyword>
<keyword id="KW-0411">Iron-sulfur</keyword>
<keyword id="KW-0413">Isomerase</keyword>
<keyword id="KW-0479">Metal-binding</keyword>
<keyword id="KW-0547">Nucleotide-binding</keyword>
<keyword id="KW-1185">Reference proteome</keyword>
<accession>Q58352</accession>
<reference key="1">
    <citation type="journal article" date="1996" name="Science">
        <title>Complete genome sequence of the methanogenic archaeon, Methanococcus jannaschii.</title>
        <authorList>
            <person name="Bult C.J."/>
            <person name="White O."/>
            <person name="Olsen G.J."/>
            <person name="Zhou L."/>
            <person name="Fleischmann R.D."/>
            <person name="Sutton G.G."/>
            <person name="Blake J.A."/>
            <person name="FitzGerald L.M."/>
            <person name="Clayton R.A."/>
            <person name="Gocayne J.D."/>
            <person name="Kerlavage A.R."/>
            <person name="Dougherty B.A."/>
            <person name="Tomb J.-F."/>
            <person name="Adams M.D."/>
            <person name="Reich C.I."/>
            <person name="Overbeek R."/>
            <person name="Kirkness E.F."/>
            <person name="Weinstock K.G."/>
            <person name="Merrick J.M."/>
            <person name="Glodek A."/>
            <person name="Scott J.L."/>
            <person name="Geoghagen N.S.M."/>
            <person name="Weidman J.F."/>
            <person name="Fuhrmann J.L."/>
            <person name="Nguyen D."/>
            <person name="Utterback T.R."/>
            <person name="Kelley J.M."/>
            <person name="Peterson J.D."/>
            <person name="Sadow P.W."/>
            <person name="Hanna M.C."/>
            <person name="Cotton M.D."/>
            <person name="Roberts K.M."/>
            <person name="Hurst M.A."/>
            <person name="Kaine B.P."/>
            <person name="Borodovsky M."/>
            <person name="Klenk H.-P."/>
            <person name="Fraser C.M."/>
            <person name="Smith H.O."/>
            <person name="Woese C.R."/>
            <person name="Venter J.C."/>
        </authorList>
    </citation>
    <scope>NUCLEOTIDE SEQUENCE [LARGE SCALE GENOMIC DNA]</scope>
    <source>
        <strain>ATCC 43067 / DSM 2661 / JAL-1 / JCM 10045 / NBRC 100440</strain>
    </source>
</reference>